<feature type="chain" id="PRO_1000055844" description="Large ribosomal subunit protein bL17">
    <location>
        <begin position="1"/>
        <end position="131"/>
    </location>
</feature>
<sequence length="131" mass="15051">MRHRHGLRKLNRTSSHRLAMLRNMTVSLLRHEAIKTTLPKAKELRRVIEPILTLGKTDSLANKRLAFNRLRDREMVVKLFAELGPRYANRNGGYLRILKMGFRVGDNAPMAFVELVDRPDTTEAVEDNSGE</sequence>
<organism>
    <name type="scientific">Janthinobacterium sp. (strain Marseille)</name>
    <name type="common">Minibacterium massiliensis</name>
    <dbReference type="NCBI Taxonomy" id="375286"/>
    <lineage>
        <taxon>Bacteria</taxon>
        <taxon>Pseudomonadati</taxon>
        <taxon>Pseudomonadota</taxon>
        <taxon>Betaproteobacteria</taxon>
        <taxon>Burkholderiales</taxon>
        <taxon>Oxalobacteraceae</taxon>
        <taxon>Janthinobacterium</taxon>
    </lineage>
</organism>
<name>RL17_JANMA</name>
<evidence type="ECO:0000255" key="1">
    <source>
        <dbReference type="HAMAP-Rule" id="MF_01368"/>
    </source>
</evidence>
<evidence type="ECO:0000305" key="2"/>
<proteinExistence type="inferred from homology"/>
<dbReference type="EMBL" id="CP000269">
    <property type="protein sequence ID" value="ABR89070.1"/>
    <property type="molecule type" value="Genomic_DNA"/>
</dbReference>
<dbReference type="RefSeq" id="WP_012081227.1">
    <property type="nucleotide sequence ID" value="NC_009659.1"/>
</dbReference>
<dbReference type="SMR" id="A6T3H7"/>
<dbReference type="STRING" id="375286.mma_3384"/>
<dbReference type="KEGG" id="mms:mma_3384"/>
<dbReference type="eggNOG" id="COG0203">
    <property type="taxonomic scope" value="Bacteria"/>
</dbReference>
<dbReference type="HOGENOM" id="CLU_074407_2_0_4"/>
<dbReference type="OrthoDB" id="9809073at2"/>
<dbReference type="Proteomes" id="UP000006388">
    <property type="component" value="Chromosome"/>
</dbReference>
<dbReference type="GO" id="GO:0022625">
    <property type="term" value="C:cytosolic large ribosomal subunit"/>
    <property type="evidence" value="ECO:0007669"/>
    <property type="project" value="TreeGrafter"/>
</dbReference>
<dbReference type="GO" id="GO:0003735">
    <property type="term" value="F:structural constituent of ribosome"/>
    <property type="evidence" value="ECO:0007669"/>
    <property type="project" value="InterPro"/>
</dbReference>
<dbReference type="GO" id="GO:0006412">
    <property type="term" value="P:translation"/>
    <property type="evidence" value="ECO:0007669"/>
    <property type="project" value="UniProtKB-UniRule"/>
</dbReference>
<dbReference type="FunFam" id="3.90.1030.10:FF:000001">
    <property type="entry name" value="50S ribosomal protein L17"/>
    <property type="match status" value="1"/>
</dbReference>
<dbReference type="Gene3D" id="3.90.1030.10">
    <property type="entry name" value="Ribosomal protein L17"/>
    <property type="match status" value="1"/>
</dbReference>
<dbReference type="HAMAP" id="MF_01368">
    <property type="entry name" value="Ribosomal_bL17"/>
    <property type="match status" value="1"/>
</dbReference>
<dbReference type="InterPro" id="IPR000456">
    <property type="entry name" value="Ribosomal_bL17"/>
</dbReference>
<dbReference type="InterPro" id="IPR047859">
    <property type="entry name" value="Ribosomal_bL17_CS"/>
</dbReference>
<dbReference type="InterPro" id="IPR036373">
    <property type="entry name" value="Ribosomal_bL17_sf"/>
</dbReference>
<dbReference type="NCBIfam" id="TIGR00059">
    <property type="entry name" value="L17"/>
    <property type="match status" value="1"/>
</dbReference>
<dbReference type="PANTHER" id="PTHR14413:SF16">
    <property type="entry name" value="LARGE RIBOSOMAL SUBUNIT PROTEIN BL17M"/>
    <property type="match status" value="1"/>
</dbReference>
<dbReference type="PANTHER" id="PTHR14413">
    <property type="entry name" value="RIBOSOMAL PROTEIN L17"/>
    <property type="match status" value="1"/>
</dbReference>
<dbReference type="Pfam" id="PF01196">
    <property type="entry name" value="Ribosomal_L17"/>
    <property type="match status" value="1"/>
</dbReference>
<dbReference type="SUPFAM" id="SSF64263">
    <property type="entry name" value="Prokaryotic ribosomal protein L17"/>
    <property type="match status" value="1"/>
</dbReference>
<dbReference type="PROSITE" id="PS01167">
    <property type="entry name" value="RIBOSOMAL_L17"/>
    <property type="match status" value="1"/>
</dbReference>
<comment type="subunit">
    <text evidence="1">Part of the 50S ribosomal subunit. Contacts protein L32.</text>
</comment>
<comment type="similarity">
    <text evidence="1">Belongs to the bacterial ribosomal protein bL17 family.</text>
</comment>
<reference key="1">
    <citation type="journal article" date="2007" name="PLoS Genet.">
        <title>Genome analysis of Minibacterium massiliensis highlights the convergent evolution of water-living bacteria.</title>
        <authorList>
            <person name="Audic S."/>
            <person name="Robert C."/>
            <person name="Campagna B."/>
            <person name="Parinello H."/>
            <person name="Claverie J.-M."/>
            <person name="Raoult D."/>
            <person name="Drancourt M."/>
        </authorList>
    </citation>
    <scope>NUCLEOTIDE SEQUENCE [LARGE SCALE GENOMIC DNA]</scope>
    <source>
        <strain>Marseille</strain>
    </source>
</reference>
<gene>
    <name evidence="1" type="primary">rplQ</name>
    <name type="ordered locus">mma_3384</name>
</gene>
<protein>
    <recommendedName>
        <fullName evidence="1">Large ribosomal subunit protein bL17</fullName>
    </recommendedName>
    <alternativeName>
        <fullName evidence="2">50S ribosomal protein L17</fullName>
    </alternativeName>
</protein>
<keyword id="KW-0687">Ribonucleoprotein</keyword>
<keyword id="KW-0689">Ribosomal protein</keyword>
<accession>A6T3H7</accession>